<proteinExistence type="inferred from homology"/>
<feature type="chain" id="PRO_0000119445" description="GTP cyclohydrolase 1">
    <location>
        <begin position="1"/>
        <end position="187"/>
    </location>
</feature>
<feature type="binding site" evidence="2">
    <location>
        <position position="76"/>
    </location>
    <ligand>
        <name>Zn(2+)</name>
        <dbReference type="ChEBI" id="CHEBI:29105"/>
    </ligand>
</feature>
<feature type="binding site" evidence="2">
    <location>
        <position position="79"/>
    </location>
    <ligand>
        <name>Zn(2+)</name>
        <dbReference type="ChEBI" id="CHEBI:29105"/>
    </ligand>
</feature>
<feature type="binding site" evidence="2">
    <location>
        <position position="148"/>
    </location>
    <ligand>
        <name>Zn(2+)</name>
        <dbReference type="ChEBI" id="CHEBI:29105"/>
    </ligand>
</feature>
<sequence length="187" mass="21258">MPNQEKMEKAIYQFLEALGENPNREGLKDTPKRVAKMYIEMFSGLNQDPKEQFTAVFSENHEEVVIVKDIPFYSMCEHHLVPFYGKAHIAYLPNDGRVTGLSKLARAVEVASKRPQLQERLTAQVAQALEDALAPKGIFVMIEAEHMCMTMRGIKKPGSKTITTVARGLYKDDRYERQEILSLIQKG</sequence>
<comment type="catalytic activity">
    <reaction evidence="2">
        <text>GTP + H2O = 7,8-dihydroneopterin 3'-triphosphate + formate + H(+)</text>
        <dbReference type="Rhea" id="RHEA:17473"/>
        <dbReference type="ChEBI" id="CHEBI:15377"/>
        <dbReference type="ChEBI" id="CHEBI:15378"/>
        <dbReference type="ChEBI" id="CHEBI:15740"/>
        <dbReference type="ChEBI" id="CHEBI:37565"/>
        <dbReference type="ChEBI" id="CHEBI:58462"/>
        <dbReference type="EC" id="3.5.4.16"/>
    </reaction>
</comment>
<comment type="pathway">
    <text evidence="2">Cofactor biosynthesis; 7,8-dihydroneopterin triphosphate biosynthesis; 7,8-dihydroneopterin triphosphate from GTP: step 1/1.</text>
</comment>
<comment type="subunit">
    <text evidence="1">Toroid-shaped homodecamer, composed of two pentamers of five dimers.</text>
</comment>
<comment type="similarity">
    <text evidence="2">Belongs to the GTP cyclohydrolase I family.</text>
</comment>
<reference key="1">
    <citation type="journal article" date="2002" name="Proc. Natl. Acad. Sci. U.S.A.">
        <title>Complete genome sequence and comparative genomic analysis of an emerging human pathogen, serotype V Streptococcus agalactiae.</title>
        <authorList>
            <person name="Tettelin H."/>
            <person name="Masignani V."/>
            <person name="Cieslewicz M.J."/>
            <person name="Eisen J.A."/>
            <person name="Peterson S.N."/>
            <person name="Wessels M.R."/>
            <person name="Paulsen I.T."/>
            <person name="Nelson K.E."/>
            <person name="Margarit I."/>
            <person name="Read T.D."/>
            <person name="Madoff L.C."/>
            <person name="Wolf A.M."/>
            <person name="Beanan M.J."/>
            <person name="Brinkac L.M."/>
            <person name="Daugherty S.C."/>
            <person name="DeBoy R.T."/>
            <person name="Durkin A.S."/>
            <person name="Kolonay J.F."/>
            <person name="Madupu R."/>
            <person name="Lewis M.R."/>
            <person name="Radune D."/>
            <person name="Fedorova N.B."/>
            <person name="Scanlan D."/>
            <person name="Khouri H.M."/>
            <person name="Mulligan S."/>
            <person name="Carty H.A."/>
            <person name="Cline R.T."/>
            <person name="Van Aken S.E."/>
            <person name="Gill J."/>
            <person name="Scarselli M."/>
            <person name="Mora M."/>
            <person name="Iacobini E.T."/>
            <person name="Brettoni C."/>
            <person name="Galli G."/>
            <person name="Mariani M."/>
            <person name="Vegni F."/>
            <person name="Maione D."/>
            <person name="Rinaudo D."/>
            <person name="Rappuoli R."/>
            <person name="Telford J.L."/>
            <person name="Kasper D.L."/>
            <person name="Grandi G."/>
            <person name="Fraser C.M."/>
        </authorList>
    </citation>
    <scope>NUCLEOTIDE SEQUENCE [LARGE SCALE GENOMIC DNA]</scope>
    <source>
        <strain>ATCC BAA-611 / 2603 V/R</strain>
    </source>
</reference>
<accession>Q8DZI5</accession>
<organism>
    <name type="scientific">Streptococcus agalactiae serotype V (strain ATCC BAA-611 / 2603 V/R)</name>
    <dbReference type="NCBI Taxonomy" id="208435"/>
    <lineage>
        <taxon>Bacteria</taxon>
        <taxon>Bacillati</taxon>
        <taxon>Bacillota</taxon>
        <taxon>Bacilli</taxon>
        <taxon>Lactobacillales</taxon>
        <taxon>Streptococcaceae</taxon>
        <taxon>Streptococcus</taxon>
    </lineage>
</organism>
<gene>
    <name evidence="2" type="primary">folE</name>
    <name type="ordered locus">SAG1116</name>
</gene>
<protein>
    <recommendedName>
        <fullName evidence="2">GTP cyclohydrolase 1</fullName>
        <ecNumber evidence="2">3.5.4.16</ecNumber>
    </recommendedName>
    <alternativeName>
        <fullName evidence="2">GTP cyclohydrolase I</fullName>
        <shortName evidence="2">GTP-CH-I</shortName>
    </alternativeName>
</protein>
<keyword id="KW-0342">GTP-binding</keyword>
<keyword id="KW-0378">Hydrolase</keyword>
<keyword id="KW-0479">Metal-binding</keyword>
<keyword id="KW-0547">Nucleotide-binding</keyword>
<keyword id="KW-0554">One-carbon metabolism</keyword>
<keyword id="KW-1185">Reference proteome</keyword>
<keyword id="KW-0862">Zinc</keyword>
<dbReference type="EC" id="3.5.4.16" evidence="2"/>
<dbReference type="EMBL" id="AE009948">
    <property type="protein sequence ID" value="AAM99997.1"/>
    <property type="molecule type" value="Genomic_DNA"/>
</dbReference>
<dbReference type="RefSeq" id="NP_688125.1">
    <property type="nucleotide sequence ID" value="NC_004116.1"/>
</dbReference>
<dbReference type="RefSeq" id="WP_001133588.1">
    <property type="nucleotide sequence ID" value="NC_004116.1"/>
</dbReference>
<dbReference type="SMR" id="Q8DZI5"/>
<dbReference type="STRING" id="208435.SAG1116"/>
<dbReference type="KEGG" id="sag:SAG1116"/>
<dbReference type="PATRIC" id="fig|208435.3.peg.1124"/>
<dbReference type="HOGENOM" id="CLU_049768_3_3_9"/>
<dbReference type="OrthoDB" id="9801207at2"/>
<dbReference type="UniPathway" id="UPA00848">
    <property type="reaction ID" value="UER00151"/>
</dbReference>
<dbReference type="Proteomes" id="UP000000821">
    <property type="component" value="Chromosome"/>
</dbReference>
<dbReference type="GO" id="GO:0005737">
    <property type="term" value="C:cytoplasm"/>
    <property type="evidence" value="ECO:0007669"/>
    <property type="project" value="TreeGrafter"/>
</dbReference>
<dbReference type="GO" id="GO:0005525">
    <property type="term" value="F:GTP binding"/>
    <property type="evidence" value="ECO:0007669"/>
    <property type="project" value="UniProtKB-KW"/>
</dbReference>
<dbReference type="GO" id="GO:0003934">
    <property type="term" value="F:GTP cyclohydrolase I activity"/>
    <property type="evidence" value="ECO:0007669"/>
    <property type="project" value="UniProtKB-UniRule"/>
</dbReference>
<dbReference type="GO" id="GO:0008270">
    <property type="term" value="F:zinc ion binding"/>
    <property type="evidence" value="ECO:0007669"/>
    <property type="project" value="UniProtKB-UniRule"/>
</dbReference>
<dbReference type="GO" id="GO:0006730">
    <property type="term" value="P:one-carbon metabolic process"/>
    <property type="evidence" value="ECO:0007669"/>
    <property type="project" value="UniProtKB-UniRule"/>
</dbReference>
<dbReference type="GO" id="GO:0006729">
    <property type="term" value="P:tetrahydrobiopterin biosynthetic process"/>
    <property type="evidence" value="ECO:0007669"/>
    <property type="project" value="TreeGrafter"/>
</dbReference>
<dbReference type="GO" id="GO:0046654">
    <property type="term" value="P:tetrahydrofolate biosynthetic process"/>
    <property type="evidence" value="ECO:0007669"/>
    <property type="project" value="UniProtKB-UniRule"/>
</dbReference>
<dbReference type="CDD" id="cd00642">
    <property type="entry name" value="GTP_cyclohydro1"/>
    <property type="match status" value="1"/>
</dbReference>
<dbReference type="FunFam" id="1.10.286.10:FF:000001">
    <property type="entry name" value="GTP cyclohydrolase 1"/>
    <property type="match status" value="1"/>
</dbReference>
<dbReference type="FunFam" id="3.30.1130.10:FF:000001">
    <property type="entry name" value="GTP cyclohydrolase 1"/>
    <property type="match status" value="1"/>
</dbReference>
<dbReference type="Gene3D" id="1.10.286.10">
    <property type="match status" value="1"/>
</dbReference>
<dbReference type="Gene3D" id="3.30.1130.10">
    <property type="match status" value="1"/>
</dbReference>
<dbReference type="HAMAP" id="MF_00223">
    <property type="entry name" value="FolE"/>
    <property type="match status" value="1"/>
</dbReference>
<dbReference type="InterPro" id="IPR043133">
    <property type="entry name" value="GTP-CH-I_C/QueF"/>
</dbReference>
<dbReference type="InterPro" id="IPR043134">
    <property type="entry name" value="GTP-CH-I_N"/>
</dbReference>
<dbReference type="InterPro" id="IPR001474">
    <property type="entry name" value="GTP_CycHdrlase_I"/>
</dbReference>
<dbReference type="InterPro" id="IPR018234">
    <property type="entry name" value="GTP_CycHdrlase_I_CS"/>
</dbReference>
<dbReference type="InterPro" id="IPR020602">
    <property type="entry name" value="GTP_CycHdrlase_I_dom"/>
</dbReference>
<dbReference type="NCBIfam" id="TIGR00063">
    <property type="entry name" value="folE"/>
    <property type="match status" value="1"/>
</dbReference>
<dbReference type="NCBIfam" id="NF006825">
    <property type="entry name" value="PRK09347.1-2"/>
    <property type="match status" value="1"/>
</dbReference>
<dbReference type="NCBIfam" id="NF006826">
    <property type="entry name" value="PRK09347.1-3"/>
    <property type="match status" value="1"/>
</dbReference>
<dbReference type="PANTHER" id="PTHR11109:SF7">
    <property type="entry name" value="GTP CYCLOHYDROLASE 1"/>
    <property type="match status" value="1"/>
</dbReference>
<dbReference type="PANTHER" id="PTHR11109">
    <property type="entry name" value="GTP CYCLOHYDROLASE I"/>
    <property type="match status" value="1"/>
</dbReference>
<dbReference type="Pfam" id="PF01227">
    <property type="entry name" value="GTP_cyclohydroI"/>
    <property type="match status" value="1"/>
</dbReference>
<dbReference type="SUPFAM" id="SSF55620">
    <property type="entry name" value="Tetrahydrobiopterin biosynthesis enzymes-like"/>
    <property type="match status" value="1"/>
</dbReference>
<dbReference type="PROSITE" id="PS00859">
    <property type="entry name" value="GTP_CYCLOHYDROL_1_1"/>
    <property type="match status" value="1"/>
</dbReference>
<dbReference type="PROSITE" id="PS00860">
    <property type="entry name" value="GTP_CYCLOHYDROL_1_2"/>
    <property type="match status" value="1"/>
</dbReference>
<evidence type="ECO:0000250" key="1"/>
<evidence type="ECO:0000255" key="2">
    <source>
        <dbReference type="HAMAP-Rule" id="MF_00223"/>
    </source>
</evidence>
<name>GCH1_STRA5</name>